<feature type="chain" id="PRO_1000127222" description="Cell division protein ZipA">
    <location>
        <begin position="1"/>
        <end position="289"/>
    </location>
</feature>
<feature type="topological domain" description="Periplasmic" evidence="1">
    <location>
        <position position="1"/>
    </location>
</feature>
<feature type="transmembrane region" description="Helical" evidence="1">
    <location>
        <begin position="2"/>
        <end position="22"/>
    </location>
</feature>
<feature type="topological domain" description="Cytoplasmic" evidence="1">
    <location>
        <begin position="23"/>
        <end position="289"/>
    </location>
</feature>
<feature type="region of interest" description="Disordered" evidence="2">
    <location>
        <begin position="66"/>
        <end position="141"/>
    </location>
</feature>
<feature type="compositionally biased region" description="Basic and acidic residues" evidence="2">
    <location>
        <begin position="81"/>
        <end position="99"/>
    </location>
</feature>
<feature type="compositionally biased region" description="Acidic residues" evidence="2">
    <location>
        <begin position="100"/>
        <end position="114"/>
    </location>
</feature>
<evidence type="ECO:0000255" key="1">
    <source>
        <dbReference type="HAMAP-Rule" id="MF_00509"/>
    </source>
</evidence>
<evidence type="ECO:0000256" key="2">
    <source>
        <dbReference type="SAM" id="MobiDB-lite"/>
    </source>
</evidence>
<protein>
    <recommendedName>
        <fullName evidence="1">Cell division protein ZipA</fullName>
    </recommendedName>
</protein>
<sequence>MDIGLREWLIVIGLIVIAGILFDGWRRMRGGKGKLKFKLDRSFANLPDDDGDSAELLGPARVVEHREPSFDEQDLPSVSAREAKERKGGKRQEEPRQGDLDLDEGLALEADPSDAAETVEPRKGKSKGRKEKEREKAPAVAAEPAPVDEVLIINVIARDESGFKGPALLQNILESGLRFGDMDIFHRHESMAGNGEILFSMANAVKPGTFDLDDIDNFSTRAVSFFLGLPGPRHPKQAFDVMVAAARKLAHELNGELKDEQRSVLTAQTIEHYRQRIIDHERRSLMQKR</sequence>
<dbReference type="EMBL" id="FM209186">
    <property type="protein sequence ID" value="CAW28527.1"/>
    <property type="molecule type" value="Genomic_DNA"/>
</dbReference>
<dbReference type="RefSeq" id="WP_003083352.1">
    <property type="nucleotide sequence ID" value="NC_011770.1"/>
</dbReference>
<dbReference type="SMR" id="B7UVJ4"/>
<dbReference type="KEGG" id="pag:PLES_38001"/>
<dbReference type="HOGENOM" id="CLU_030174_0_1_6"/>
<dbReference type="GO" id="GO:0032153">
    <property type="term" value="C:cell division site"/>
    <property type="evidence" value="ECO:0007669"/>
    <property type="project" value="UniProtKB-UniRule"/>
</dbReference>
<dbReference type="GO" id="GO:0005886">
    <property type="term" value="C:plasma membrane"/>
    <property type="evidence" value="ECO:0007669"/>
    <property type="project" value="UniProtKB-SubCell"/>
</dbReference>
<dbReference type="GO" id="GO:0000917">
    <property type="term" value="P:division septum assembly"/>
    <property type="evidence" value="ECO:0007669"/>
    <property type="project" value="TreeGrafter"/>
</dbReference>
<dbReference type="GO" id="GO:0043093">
    <property type="term" value="P:FtsZ-dependent cytokinesis"/>
    <property type="evidence" value="ECO:0007669"/>
    <property type="project" value="UniProtKB-UniRule"/>
</dbReference>
<dbReference type="CDD" id="cd00231">
    <property type="entry name" value="ZipA"/>
    <property type="match status" value="1"/>
</dbReference>
<dbReference type="FunFam" id="3.30.1400.10:FF:000002">
    <property type="entry name" value="Cell division protein ZipA"/>
    <property type="match status" value="1"/>
</dbReference>
<dbReference type="Gene3D" id="3.30.1400.10">
    <property type="entry name" value="ZipA, C-terminal FtsZ-binding domain"/>
    <property type="match status" value="1"/>
</dbReference>
<dbReference type="HAMAP" id="MF_00509">
    <property type="entry name" value="ZipA"/>
    <property type="match status" value="1"/>
</dbReference>
<dbReference type="InterPro" id="IPR011919">
    <property type="entry name" value="Cell_div_ZipA"/>
</dbReference>
<dbReference type="InterPro" id="IPR007449">
    <property type="entry name" value="ZipA_FtsZ-bd_C"/>
</dbReference>
<dbReference type="InterPro" id="IPR036765">
    <property type="entry name" value="ZipA_FtsZ-bd_C_sf"/>
</dbReference>
<dbReference type="NCBIfam" id="TIGR02205">
    <property type="entry name" value="septum_zipA"/>
    <property type="match status" value="1"/>
</dbReference>
<dbReference type="PANTHER" id="PTHR38685">
    <property type="entry name" value="CELL DIVISION PROTEIN ZIPA"/>
    <property type="match status" value="1"/>
</dbReference>
<dbReference type="PANTHER" id="PTHR38685:SF1">
    <property type="entry name" value="CELL DIVISION PROTEIN ZIPA"/>
    <property type="match status" value="1"/>
</dbReference>
<dbReference type="Pfam" id="PF04354">
    <property type="entry name" value="ZipA_C"/>
    <property type="match status" value="1"/>
</dbReference>
<dbReference type="SMART" id="SM00771">
    <property type="entry name" value="ZipA_C"/>
    <property type="match status" value="1"/>
</dbReference>
<dbReference type="SUPFAM" id="SSF64383">
    <property type="entry name" value="Cell-division protein ZipA, C-terminal domain"/>
    <property type="match status" value="1"/>
</dbReference>
<accession>B7UVJ4</accession>
<comment type="function">
    <text evidence="1">Essential cell division protein that stabilizes the FtsZ protofilaments by cross-linking them and that serves as a cytoplasmic membrane anchor for the Z ring. Also required for the recruitment to the septal ring of downstream cell division proteins.</text>
</comment>
<comment type="subunit">
    <text evidence="1">Interacts with FtsZ via their C-terminal domains.</text>
</comment>
<comment type="subcellular location">
    <subcellularLocation>
        <location evidence="1">Cell inner membrane</location>
        <topology evidence="1">Single-pass type I membrane protein</topology>
    </subcellularLocation>
    <text evidence="1">Localizes to the Z ring in an FtsZ-dependent manner.</text>
</comment>
<comment type="similarity">
    <text evidence="1">Belongs to the ZipA family.</text>
</comment>
<gene>
    <name evidence="1" type="primary">zipA</name>
    <name type="ordered locus">PLES_38001</name>
</gene>
<keyword id="KW-0131">Cell cycle</keyword>
<keyword id="KW-0132">Cell division</keyword>
<keyword id="KW-0997">Cell inner membrane</keyword>
<keyword id="KW-1003">Cell membrane</keyword>
<keyword id="KW-0472">Membrane</keyword>
<keyword id="KW-0812">Transmembrane</keyword>
<keyword id="KW-1133">Transmembrane helix</keyword>
<proteinExistence type="inferred from homology"/>
<organism>
    <name type="scientific">Pseudomonas aeruginosa (strain LESB58)</name>
    <dbReference type="NCBI Taxonomy" id="557722"/>
    <lineage>
        <taxon>Bacteria</taxon>
        <taxon>Pseudomonadati</taxon>
        <taxon>Pseudomonadota</taxon>
        <taxon>Gammaproteobacteria</taxon>
        <taxon>Pseudomonadales</taxon>
        <taxon>Pseudomonadaceae</taxon>
        <taxon>Pseudomonas</taxon>
    </lineage>
</organism>
<reference key="1">
    <citation type="journal article" date="2009" name="Genome Res.">
        <title>Newly introduced genomic prophage islands are critical determinants of in vivo competitiveness in the Liverpool epidemic strain of Pseudomonas aeruginosa.</title>
        <authorList>
            <person name="Winstanley C."/>
            <person name="Langille M.G.I."/>
            <person name="Fothergill J.L."/>
            <person name="Kukavica-Ibrulj I."/>
            <person name="Paradis-Bleau C."/>
            <person name="Sanschagrin F."/>
            <person name="Thomson N.R."/>
            <person name="Winsor G.L."/>
            <person name="Quail M.A."/>
            <person name="Lennard N."/>
            <person name="Bignell A."/>
            <person name="Clarke L."/>
            <person name="Seeger K."/>
            <person name="Saunders D."/>
            <person name="Harris D."/>
            <person name="Parkhill J."/>
            <person name="Hancock R.E.W."/>
            <person name="Brinkman F.S.L."/>
            <person name="Levesque R.C."/>
        </authorList>
    </citation>
    <scope>NUCLEOTIDE SEQUENCE [LARGE SCALE GENOMIC DNA]</scope>
    <source>
        <strain>LESB58</strain>
    </source>
</reference>
<name>ZIPA_PSEA8</name>